<accession>E9Q0B3</accession>
<accession>Q8C4H3</accession>
<comment type="subcellular location">
    <subcellularLocation>
        <location evidence="3">Membrane</location>
        <topology evidence="3">Single-pass membrane protein</topology>
    </subcellularLocation>
</comment>
<reference key="1">
    <citation type="journal article" date="2009" name="PLoS Biol.">
        <title>Lineage-specific biology revealed by a finished genome assembly of the mouse.</title>
        <authorList>
            <person name="Church D.M."/>
            <person name="Goodstadt L."/>
            <person name="Hillier L.W."/>
            <person name="Zody M.C."/>
            <person name="Goldstein S."/>
            <person name="She X."/>
            <person name="Bult C.J."/>
            <person name="Agarwala R."/>
            <person name="Cherry J.L."/>
            <person name="DiCuccio M."/>
            <person name="Hlavina W."/>
            <person name="Kapustin Y."/>
            <person name="Meric P."/>
            <person name="Maglott D."/>
            <person name="Birtle Z."/>
            <person name="Marques A.C."/>
            <person name="Graves T."/>
            <person name="Zhou S."/>
            <person name="Teague B."/>
            <person name="Potamousis K."/>
            <person name="Churas C."/>
            <person name="Place M."/>
            <person name="Herschleb J."/>
            <person name="Runnheim R."/>
            <person name="Forrest D."/>
            <person name="Amos-Landgraf J."/>
            <person name="Schwartz D.C."/>
            <person name="Cheng Z."/>
            <person name="Lindblad-Toh K."/>
            <person name="Eichler E.E."/>
            <person name="Ponting C.P."/>
        </authorList>
    </citation>
    <scope>NUCLEOTIDE SEQUENCE [LARGE SCALE GENOMIC DNA]</scope>
    <source>
        <strain>C57BL/6J</strain>
    </source>
</reference>
<reference key="2">
    <citation type="journal article" date="2005" name="Science">
        <title>The transcriptional landscape of the mammalian genome.</title>
        <authorList>
            <person name="Carninci P."/>
            <person name="Kasukawa T."/>
            <person name="Katayama S."/>
            <person name="Gough J."/>
            <person name="Frith M.C."/>
            <person name="Maeda N."/>
            <person name="Oyama R."/>
            <person name="Ravasi T."/>
            <person name="Lenhard B."/>
            <person name="Wells C."/>
            <person name="Kodzius R."/>
            <person name="Shimokawa K."/>
            <person name="Bajic V.B."/>
            <person name="Brenner S.E."/>
            <person name="Batalov S."/>
            <person name="Forrest A.R."/>
            <person name="Zavolan M."/>
            <person name="Davis M.J."/>
            <person name="Wilming L.G."/>
            <person name="Aidinis V."/>
            <person name="Allen J.E."/>
            <person name="Ambesi-Impiombato A."/>
            <person name="Apweiler R."/>
            <person name="Aturaliya R.N."/>
            <person name="Bailey T.L."/>
            <person name="Bansal M."/>
            <person name="Baxter L."/>
            <person name="Beisel K.W."/>
            <person name="Bersano T."/>
            <person name="Bono H."/>
            <person name="Chalk A.M."/>
            <person name="Chiu K.P."/>
            <person name="Choudhary V."/>
            <person name="Christoffels A."/>
            <person name="Clutterbuck D.R."/>
            <person name="Crowe M.L."/>
            <person name="Dalla E."/>
            <person name="Dalrymple B.P."/>
            <person name="de Bono B."/>
            <person name="Della Gatta G."/>
            <person name="di Bernardo D."/>
            <person name="Down T."/>
            <person name="Engstrom P."/>
            <person name="Fagiolini M."/>
            <person name="Faulkner G."/>
            <person name="Fletcher C.F."/>
            <person name="Fukushima T."/>
            <person name="Furuno M."/>
            <person name="Futaki S."/>
            <person name="Gariboldi M."/>
            <person name="Georgii-Hemming P."/>
            <person name="Gingeras T.R."/>
            <person name="Gojobori T."/>
            <person name="Green R.E."/>
            <person name="Gustincich S."/>
            <person name="Harbers M."/>
            <person name="Hayashi Y."/>
            <person name="Hensch T.K."/>
            <person name="Hirokawa N."/>
            <person name="Hill D."/>
            <person name="Huminiecki L."/>
            <person name="Iacono M."/>
            <person name="Ikeo K."/>
            <person name="Iwama A."/>
            <person name="Ishikawa T."/>
            <person name="Jakt M."/>
            <person name="Kanapin A."/>
            <person name="Katoh M."/>
            <person name="Kawasawa Y."/>
            <person name="Kelso J."/>
            <person name="Kitamura H."/>
            <person name="Kitano H."/>
            <person name="Kollias G."/>
            <person name="Krishnan S.P."/>
            <person name="Kruger A."/>
            <person name="Kummerfeld S.K."/>
            <person name="Kurochkin I.V."/>
            <person name="Lareau L.F."/>
            <person name="Lazarevic D."/>
            <person name="Lipovich L."/>
            <person name="Liu J."/>
            <person name="Liuni S."/>
            <person name="McWilliam S."/>
            <person name="Madan Babu M."/>
            <person name="Madera M."/>
            <person name="Marchionni L."/>
            <person name="Matsuda H."/>
            <person name="Matsuzawa S."/>
            <person name="Miki H."/>
            <person name="Mignone F."/>
            <person name="Miyake S."/>
            <person name="Morris K."/>
            <person name="Mottagui-Tabar S."/>
            <person name="Mulder N."/>
            <person name="Nakano N."/>
            <person name="Nakauchi H."/>
            <person name="Ng P."/>
            <person name="Nilsson R."/>
            <person name="Nishiguchi S."/>
            <person name="Nishikawa S."/>
            <person name="Nori F."/>
            <person name="Ohara O."/>
            <person name="Okazaki Y."/>
            <person name="Orlando V."/>
            <person name="Pang K.C."/>
            <person name="Pavan W.J."/>
            <person name="Pavesi G."/>
            <person name="Pesole G."/>
            <person name="Petrovsky N."/>
            <person name="Piazza S."/>
            <person name="Reed J."/>
            <person name="Reid J.F."/>
            <person name="Ring B.Z."/>
            <person name="Ringwald M."/>
            <person name="Rost B."/>
            <person name="Ruan Y."/>
            <person name="Salzberg S.L."/>
            <person name="Sandelin A."/>
            <person name="Schneider C."/>
            <person name="Schoenbach C."/>
            <person name="Sekiguchi K."/>
            <person name="Semple C.A."/>
            <person name="Seno S."/>
            <person name="Sessa L."/>
            <person name="Sheng Y."/>
            <person name="Shibata Y."/>
            <person name="Shimada H."/>
            <person name="Shimada K."/>
            <person name="Silva D."/>
            <person name="Sinclair B."/>
            <person name="Sperling S."/>
            <person name="Stupka E."/>
            <person name="Sugiura K."/>
            <person name="Sultana R."/>
            <person name="Takenaka Y."/>
            <person name="Taki K."/>
            <person name="Tammoja K."/>
            <person name="Tan S.L."/>
            <person name="Tang S."/>
            <person name="Taylor M.S."/>
            <person name="Tegner J."/>
            <person name="Teichmann S.A."/>
            <person name="Ueda H.R."/>
            <person name="van Nimwegen E."/>
            <person name="Verardo R."/>
            <person name="Wei C.L."/>
            <person name="Yagi K."/>
            <person name="Yamanishi H."/>
            <person name="Zabarovsky E."/>
            <person name="Zhu S."/>
            <person name="Zimmer A."/>
            <person name="Hide W."/>
            <person name="Bult C."/>
            <person name="Grimmond S.M."/>
            <person name="Teasdale R.D."/>
            <person name="Liu E.T."/>
            <person name="Brusic V."/>
            <person name="Quackenbush J."/>
            <person name="Wahlestedt C."/>
            <person name="Mattick J.S."/>
            <person name="Hume D.A."/>
            <person name="Kai C."/>
            <person name="Sasaki D."/>
            <person name="Tomaru Y."/>
            <person name="Fukuda S."/>
            <person name="Kanamori-Katayama M."/>
            <person name="Suzuki M."/>
            <person name="Aoki J."/>
            <person name="Arakawa T."/>
            <person name="Iida J."/>
            <person name="Imamura K."/>
            <person name="Itoh M."/>
            <person name="Kato T."/>
            <person name="Kawaji H."/>
            <person name="Kawagashira N."/>
            <person name="Kawashima T."/>
            <person name="Kojima M."/>
            <person name="Kondo S."/>
            <person name="Konno H."/>
            <person name="Nakano K."/>
            <person name="Ninomiya N."/>
            <person name="Nishio T."/>
            <person name="Okada M."/>
            <person name="Plessy C."/>
            <person name="Shibata K."/>
            <person name="Shiraki T."/>
            <person name="Suzuki S."/>
            <person name="Tagami M."/>
            <person name="Waki K."/>
            <person name="Watahiki A."/>
            <person name="Okamura-Oho Y."/>
            <person name="Suzuki H."/>
            <person name="Kawai J."/>
            <person name="Hayashizaki Y."/>
        </authorList>
    </citation>
    <scope>NUCLEOTIDE SEQUENCE [LARGE SCALE MRNA] OF 46-247</scope>
    <source>
        <strain>C57BL/6J</strain>
        <tissue>Cerebellum</tissue>
    </source>
</reference>
<organism>
    <name type="scientific">Mus musculus</name>
    <name type="common">Mouse</name>
    <dbReference type="NCBI Taxonomy" id="10090"/>
    <lineage>
        <taxon>Eukaryota</taxon>
        <taxon>Metazoa</taxon>
        <taxon>Chordata</taxon>
        <taxon>Craniata</taxon>
        <taxon>Vertebrata</taxon>
        <taxon>Euteleostomi</taxon>
        <taxon>Mammalia</taxon>
        <taxon>Eutheria</taxon>
        <taxon>Euarchontoglires</taxon>
        <taxon>Glires</taxon>
        <taxon>Rodentia</taxon>
        <taxon>Myomorpha</taxon>
        <taxon>Muroidea</taxon>
        <taxon>Muridae</taxon>
        <taxon>Murinae</taxon>
        <taxon>Mus</taxon>
        <taxon>Mus</taxon>
    </lineage>
</organism>
<feature type="signal peptide" evidence="1">
    <location>
        <begin position="1"/>
        <end position="35"/>
    </location>
</feature>
<feature type="chain" id="PRO_0000413692" description="Uncharacterized membrane protein C3orf80 homolog">
    <location>
        <begin position="36"/>
        <end position="247"/>
    </location>
</feature>
<feature type="transmembrane region" description="Helical" evidence="1">
    <location>
        <begin position="82"/>
        <end position="102"/>
    </location>
</feature>
<feature type="region of interest" description="Disordered" evidence="2">
    <location>
        <begin position="109"/>
        <end position="176"/>
    </location>
</feature>
<feature type="compositionally biased region" description="Low complexity" evidence="2">
    <location>
        <begin position="111"/>
        <end position="120"/>
    </location>
</feature>
<feature type="compositionally biased region" description="Gly residues" evidence="2">
    <location>
        <begin position="161"/>
        <end position="171"/>
    </location>
</feature>
<name>CC080_MOUSE</name>
<keyword id="KW-0472">Membrane</keyword>
<keyword id="KW-1185">Reference proteome</keyword>
<keyword id="KW-0732">Signal</keyword>
<keyword id="KW-0812">Transmembrane</keyword>
<keyword id="KW-1133">Transmembrane helix</keyword>
<dbReference type="EMBL" id="AC115062">
    <property type="status" value="NOT_ANNOTATED_CDS"/>
    <property type="molecule type" value="Genomic_DNA"/>
</dbReference>
<dbReference type="EMBL" id="AK082199">
    <property type="protein sequence ID" value="BAC38434.1"/>
    <property type="molecule type" value="mRNA"/>
</dbReference>
<dbReference type="CCDS" id="CCDS50931.1"/>
<dbReference type="RefSeq" id="NP_001161468.1">
    <property type="nucleotide sequence ID" value="NM_001167996.2"/>
</dbReference>
<dbReference type="SMR" id="E9Q0B3"/>
<dbReference type="FunCoup" id="E9Q0B3">
    <property type="interactions" value="1"/>
</dbReference>
<dbReference type="GlyGen" id="E9Q0B3">
    <property type="glycosylation" value="1 site, 1 N-linked glycan (1 site)"/>
</dbReference>
<dbReference type="PhosphoSitePlus" id="E9Q0B3"/>
<dbReference type="PaxDb" id="10090-ENSMUSP00000056782"/>
<dbReference type="Antibodypedia" id="50240">
    <property type="antibodies" value="5 antibodies from 5 providers"/>
</dbReference>
<dbReference type="Ensembl" id="ENSMUST00000054551.3">
    <property type="protein sequence ID" value="ENSMUSP00000056782.3"/>
    <property type="gene ID" value="ENSMUSG00000046999.3"/>
</dbReference>
<dbReference type="GeneID" id="68725"/>
<dbReference type="KEGG" id="mmu:68725"/>
<dbReference type="UCSC" id="uc012cqj.1">
    <property type="organism name" value="mouse"/>
</dbReference>
<dbReference type="AGR" id="MGI:1915975"/>
<dbReference type="MGI" id="MGI:1915975">
    <property type="gene designation" value="1110032F04Rik"/>
</dbReference>
<dbReference type="VEuPathDB" id="HostDB:ENSMUSG00000046999"/>
<dbReference type="eggNOG" id="ENOG502S2DR">
    <property type="taxonomic scope" value="Eukaryota"/>
</dbReference>
<dbReference type="GeneTree" id="ENSGT00390000005823"/>
<dbReference type="HOGENOM" id="CLU_1363090_0_0_1"/>
<dbReference type="InParanoid" id="E9Q0B3"/>
<dbReference type="OMA" id="QESCCSY"/>
<dbReference type="OrthoDB" id="9837880at2759"/>
<dbReference type="TreeFam" id="TF337543"/>
<dbReference type="BioGRID-ORCS" id="68725">
    <property type="hits" value="1 hit in 77 CRISPR screens"/>
</dbReference>
<dbReference type="PRO" id="PR:E9Q0B3"/>
<dbReference type="Proteomes" id="UP000000589">
    <property type="component" value="Chromosome 3"/>
</dbReference>
<dbReference type="RNAct" id="E9Q0B3">
    <property type="molecule type" value="protein"/>
</dbReference>
<dbReference type="Bgee" id="ENSMUSG00000046999">
    <property type="expression patterns" value="Expressed in lumbar dorsal root ganglion and 100 other cell types or tissues"/>
</dbReference>
<dbReference type="GO" id="GO:0016020">
    <property type="term" value="C:membrane"/>
    <property type="evidence" value="ECO:0007669"/>
    <property type="project" value="UniProtKB-SubCell"/>
</dbReference>
<dbReference type="InterPro" id="IPR031696">
    <property type="entry name" value="DUF4719"/>
</dbReference>
<dbReference type="PANTHER" id="PTHR38505">
    <property type="entry name" value="HYPOTHETICAL PROTEIN LOC100362176"/>
    <property type="match status" value="1"/>
</dbReference>
<dbReference type="PANTHER" id="PTHR38505:SF1">
    <property type="entry name" value="RIKEN CDNA 1110032F04 GENE"/>
    <property type="match status" value="1"/>
</dbReference>
<dbReference type="Pfam" id="PF15843">
    <property type="entry name" value="DUF4719"/>
    <property type="match status" value="1"/>
</dbReference>
<sequence>MWGPGVTAEGLSVAPAPPPLLPLLLLLALALVAPSRGGGGCAELACGERERCCDSANATAVRCCKLPLHAFLDNVGWFVRKLSGLLILLVLFAIGYFLQRIICPSPRRYPRGQARPGQARPGPPGGAGPPGTAGPPDDDDDSPALLRDEVAAGSQDSLLDSGGGRGRGSGGRLPPSCVSEHELHVVSPVFLQLPSYEEVKYLPTYEESMRLQQLSPAEVVLPVSVLGRPRGGSAGDSDGGQVRFPLI</sequence>
<evidence type="ECO:0000255" key="1"/>
<evidence type="ECO:0000256" key="2">
    <source>
        <dbReference type="SAM" id="MobiDB-lite"/>
    </source>
</evidence>
<evidence type="ECO:0000305" key="3"/>
<protein>
    <recommendedName>
        <fullName>Uncharacterized membrane protein C3orf80 homolog</fullName>
    </recommendedName>
</protein>
<proteinExistence type="evidence at transcript level"/>